<proteinExistence type="evidence at protein level"/>
<name>STP4_PIG</name>
<accession>Q09821</accession>
<sequence>AKVSRKPREPRTAVTQSTRRIKRKKTLSKPRSRGGVKAPKTTMKIKRALRRNLRRKIQTSAGQPKKAKKARKHFVSYYVLKKSGQNKKTNQNKRQNQNKRQNQNKRRGQPVPEQEIMEKPTTSCKWCSQGVTRRGRRY</sequence>
<reference key="1">
    <citation type="journal article" date="1995" name="Eur. J. Biochem.">
        <title>The amino acid sequence and interaction with the nucleosome core DNA of transition protein 4 from boar late spermatid nuclei.</title>
        <authorList>
            <person name="Akama K."/>
            <person name="Ichimura H."/>
            <person name="Sato H."/>
            <person name="Kojima S."/>
            <person name="Miura K."/>
            <person name="Hayashi H."/>
            <person name="Komatsu Y."/>
            <person name="Nakano M."/>
        </authorList>
    </citation>
    <scope>PROTEIN SEQUENCE</scope>
    <source>
        <tissue>Spermatid</tissue>
    </source>
</reference>
<organism>
    <name type="scientific">Sus scrofa</name>
    <name type="common">Pig</name>
    <dbReference type="NCBI Taxonomy" id="9823"/>
    <lineage>
        <taxon>Eukaryota</taxon>
        <taxon>Metazoa</taxon>
        <taxon>Chordata</taxon>
        <taxon>Craniata</taxon>
        <taxon>Vertebrata</taxon>
        <taxon>Euteleostomi</taxon>
        <taxon>Mammalia</taxon>
        <taxon>Eutheria</taxon>
        <taxon>Laurasiatheria</taxon>
        <taxon>Artiodactyla</taxon>
        <taxon>Suina</taxon>
        <taxon>Suidae</taxon>
        <taxon>Sus</taxon>
    </lineage>
</organism>
<keyword id="KW-0158">Chromosome</keyword>
<keyword id="KW-0217">Developmental protein</keyword>
<keyword id="KW-0221">Differentiation</keyword>
<keyword id="KW-0903">Direct protein sequencing</keyword>
<keyword id="KW-0238">DNA-binding</keyword>
<keyword id="KW-0544">Nucleosome core</keyword>
<keyword id="KW-0539">Nucleus</keyword>
<keyword id="KW-0597">Phosphoprotein</keyword>
<keyword id="KW-1185">Reference proteome</keyword>
<keyword id="KW-0744">Spermatogenesis</keyword>
<dbReference type="PIR" id="S67968">
    <property type="entry name" value="S67968"/>
</dbReference>
<dbReference type="STRING" id="9823.ENSSSCP00000034612"/>
<dbReference type="PaxDb" id="9823-ENSSSCP00000013527"/>
<dbReference type="Ensembl" id="ENSSSCT00090011849">
    <property type="protein sequence ID" value="ENSSSCP00090007494"/>
    <property type="gene ID" value="ENSSSCG00090006717"/>
</dbReference>
<dbReference type="eggNOG" id="ENOG502TD5A">
    <property type="taxonomic scope" value="Eukaryota"/>
</dbReference>
<dbReference type="HOGENOM" id="CLU_1844497_0_0_1"/>
<dbReference type="InParanoid" id="Q09821"/>
<dbReference type="OMA" id="EKPTTSC"/>
<dbReference type="Proteomes" id="UP000008227">
    <property type="component" value="Unplaced"/>
</dbReference>
<dbReference type="Proteomes" id="UP000314985">
    <property type="component" value="Unplaced"/>
</dbReference>
<dbReference type="Proteomes" id="UP000694570">
    <property type="component" value="Unplaced"/>
</dbReference>
<dbReference type="Proteomes" id="UP000694571">
    <property type="component" value="Unplaced"/>
</dbReference>
<dbReference type="Proteomes" id="UP000694720">
    <property type="component" value="Unplaced"/>
</dbReference>
<dbReference type="Proteomes" id="UP000694722">
    <property type="component" value="Unplaced"/>
</dbReference>
<dbReference type="Proteomes" id="UP000694723">
    <property type="component" value="Unplaced"/>
</dbReference>
<dbReference type="Proteomes" id="UP000694724">
    <property type="component" value="Unplaced"/>
</dbReference>
<dbReference type="Proteomes" id="UP000694725">
    <property type="component" value="Unplaced"/>
</dbReference>
<dbReference type="Proteomes" id="UP000694726">
    <property type="component" value="Unplaced"/>
</dbReference>
<dbReference type="Proteomes" id="UP000694727">
    <property type="component" value="Unplaced"/>
</dbReference>
<dbReference type="Proteomes" id="UP000694728">
    <property type="component" value="Unplaced"/>
</dbReference>
<dbReference type="GO" id="GO:0000786">
    <property type="term" value="C:nucleosome"/>
    <property type="evidence" value="ECO:0007669"/>
    <property type="project" value="UniProtKB-KW"/>
</dbReference>
<dbReference type="GO" id="GO:0005634">
    <property type="term" value="C:nucleus"/>
    <property type="evidence" value="ECO:0007669"/>
    <property type="project" value="UniProtKB-SubCell"/>
</dbReference>
<dbReference type="GO" id="GO:0003677">
    <property type="term" value="F:DNA binding"/>
    <property type="evidence" value="ECO:0007669"/>
    <property type="project" value="UniProtKB-KW"/>
</dbReference>
<dbReference type="GO" id="GO:0030154">
    <property type="term" value="P:cell differentiation"/>
    <property type="evidence" value="ECO:0007669"/>
    <property type="project" value="UniProtKB-KW"/>
</dbReference>
<dbReference type="GO" id="GO:0007283">
    <property type="term" value="P:spermatogenesis"/>
    <property type="evidence" value="ECO:0007669"/>
    <property type="project" value="UniProtKB-KW"/>
</dbReference>
<dbReference type="InterPro" id="IPR040433">
    <property type="entry name" value="Spermatid_TP"/>
</dbReference>
<dbReference type="PANTHER" id="PTHR37876">
    <property type="entry name" value="PROTEIN GAR2-LIKE"/>
    <property type="match status" value="1"/>
</dbReference>
<dbReference type="PANTHER" id="PTHR37876:SF2">
    <property type="entry name" value="SPERMATID NUCLEAR TRANSITION PROTEIN 4"/>
    <property type="match status" value="1"/>
</dbReference>
<gene>
    <name type="primary">TNP4</name>
</gene>
<comment type="function">
    <text>Involved in nuclear basic protein transition: histones are replaced by spermatid specific proteins which are themselves replaced by protamines in late spermatids.</text>
</comment>
<comment type="subcellular location">
    <subcellularLocation>
        <location>Nucleus</location>
    </subcellularLocation>
    <subcellularLocation>
        <location>Chromosome</location>
    </subcellularLocation>
</comment>
<comment type="domain">
    <text>The N-terminal half is highly basic.</text>
</comment>
<protein>
    <recommendedName>
        <fullName>Spermatid nuclear transition protein 4</fullName>
        <shortName>STP-4</shortName>
        <shortName>TP-4</shortName>
        <shortName>TP4</shortName>
    </recommendedName>
</protein>
<feature type="chain" id="PRO_0000191436" description="Spermatid nuclear transition protein 4">
    <location>
        <begin position="1"/>
        <end position="138"/>
    </location>
</feature>
<feature type="region of interest" description="Disordered" evidence="2">
    <location>
        <begin position="1"/>
        <end position="138"/>
    </location>
</feature>
<feature type="short sequence motif" description="Nuclear localization signal" evidence="1">
    <location>
        <begin position="5"/>
        <end position="23"/>
    </location>
</feature>
<feature type="short sequence motif" description="Nuclear localization signal" evidence="1">
    <location>
        <begin position="54"/>
        <end position="72"/>
    </location>
</feature>
<feature type="compositionally biased region" description="Basic and acidic residues" evidence="2">
    <location>
        <begin position="1"/>
        <end position="11"/>
    </location>
</feature>
<feature type="compositionally biased region" description="Basic residues" evidence="2">
    <location>
        <begin position="19"/>
        <end position="34"/>
    </location>
</feature>
<feature type="compositionally biased region" description="Basic residues" evidence="2">
    <location>
        <begin position="43"/>
        <end position="57"/>
    </location>
</feature>
<feature type="compositionally biased region" description="Basic residues" evidence="2">
    <location>
        <begin position="65"/>
        <end position="74"/>
    </location>
</feature>
<feature type="compositionally biased region" description="Low complexity" evidence="2">
    <location>
        <begin position="86"/>
        <end position="101"/>
    </location>
</feature>
<feature type="compositionally biased region" description="Polar residues" evidence="2">
    <location>
        <begin position="120"/>
        <end position="131"/>
    </location>
</feature>
<feature type="site" description="Binding to nucleic acids">
    <location>
        <position position="126"/>
    </location>
</feature>
<feature type="modified residue" description="Phosphoserine; by PKC" evidence="1">
    <location>
        <position position="4"/>
    </location>
</feature>
<feature type="modified residue" description="Phosphothreonine; by PKA" evidence="1">
    <location>
        <position position="26"/>
    </location>
</feature>
<evidence type="ECO:0000255" key="1"/>
<evidence type="ECO:0000256" key="2">
    <source>
        <dbReference type="SAM" id="MobiDB-lite"/>
    </source>
</evidence>